<protein>
    <recommendedName>
        <fullName>ATP-dependent RNA helicase-like protein DB10</fullName>
        <ecNumber>3.6.4.13</ecNumber>
    </recommendedName>
</protein>
<name>DB10_NICSY</name>
<sequence length="607" mass="65989">MAVVTASSAGPSYAPEDPTLPKPWKGLVDGTTGFIYFWNPETNDTQYERPVPSSHAVSAPAHKSSVFVSSSVEKPSQGQRYDADGGHNRGSNNKIARSSSDRFHDGTSVHEGYGSLGVGSDISQESYCRRNEISVTGGDVPAPLTSFEATGFPSEIVREMHQAGFSAPTPIQAQSWPIALQGRDIVAIAKTGSGKTLGYLMPAFIHLQQRRKNPQLGPTILVLSPTRELATQIQAEAVKFGKSSRISCTCLYGGAPKGPQLRELSRGVDIVVATPGRLNDILEMRRVSLGQVSYLVLDEADRMLDMGFEPQIRKIVKEVPVQRQTLMYTATWPKGVRKIAADLLVNSVQVNIGNVDELVANKSITQHIEVVLPMEKQRRVEQILRSKEPGSKIIIFCSTKKMCDQLSRNLTRNFGAAAIHGDKSQGERDYVLSQFRAGRSPVLVATDVAARGLDIKDIRVVINYDFPTGIEDYVHRIGRTGRAGASGLAYTFFSDQDSKHALDLVKVLEGANQCVPTELRDMASRGGGMGRARNHWGSGPGGRGGRGGPYNSSYVGRNGGHGYDRGSRDSDRYGHGTYNADAPRKRSRSRSPNIGSGWSGKKSRFTD</sequence>
<reference key="1">
    <citation type="journal article" date="1994" name="Plant Mol. Biol.">
        <title>Structure and expression of a cDNA encoding an RNA helicase-like protein in tobacco.</title>
        <authorList>
            <person name="Itadani H."/>
            <person name="Sugita M."/>
            <person name="Sugiura M."/>
        </authorList>
    </citation>
    <scope>NUCLEOTIDE SEQUENCE [MRNA]</scope>
</reference>
<dbReference type="EC" id="3.6.4.13"/>
<dbReference type="EMBL" id="D16247">
    <property type="protein sequence ID" value="BAA03763.1"/>
    <property type="molecule type" value="mRNA"/>
</dbReference>
<dbReference type="PIR" id="S42639">
    <property type="entry name" value="S42639"/>
</dbReference>
<dbReference type="RefSeq" id="NP_001289543.1">
    <property type="nucleotide sequence ID" value="NM_001302614.1"/>
</dbReference>
<dbReference type="SMR" id="P46942"/>
<dbReference type="STRING" id="4096.P46942"/>
<dbReference type="GeneID" id="104219642"/>
<dbReference type="KEGG" id="nsy:104219642"/>
<dbReference type="eggNOG" id="KOG0331">
    <property type="taxonomic scope" value="Eukaryota"/>
</dbReference>
<dbReference type="Proteomes" id="UP000189701">
    <property type="component" value="Unplaced"/>
</dbReference>
<dbReference type="GO" id="GO:0005524">
    <property type="term" value="F:ATP binding"/>
    <property type="evidence" value="ECO:0007669"/>
    <property type="project" value="UniProtKB-KW"/>
</dbReference>
<dbReference type="GO" id="GO:0016887">
    <property type="term" value="F:ATP hydrolysis activity"/>
    <property type="evidence" value="ECO:0007669"/>
    <property type="project" value="RHEA"/>
</dbReference>
<dbReference type="GO" id="GO:0003723">
    <property type="term" value="F:RNA binding"/>
    <property type="evidence" value="ECO:0007669"/>
    <property type="project" value="UniProtKB-KW"/>
</dbReference>
<dbReference type="GO" id="GO:0003724">
    <property type="term" value="F:RNA helicase activity"/>
    <property type="evidence" value="ECO:0007669"/>
    <property type="project" value="UniProtKB-EC"/>
</dbReference>
<dbReference type="CDD" id="cd18787">
    <property type="entry name" value="SF2_C_DEAD"/>
    <property type="match status" value="1"/>
</dbReference>
<dbReference type="CDD" id="cd00201">
    <property type="entry name" value="WW"/>
    <property type="match status" value="1"/>
</dbReference>
<dbReference type="FunFam" id="3.40.50.300:FF:000008">
    <property type="entry name" value="ATP-dependent RNA helicase RhlB"/>
    <property type="match status" value="1"/>
</dbReference>
<dbReference type="FunFam" id="3.40.50.300:FF:000079">
    <property type="entry name" value="probable ATP-dependent RNA helicase DDX17"/>
    <property type="match status" value="1"/>
</dbReference>
<dbReference type="Gene3D" id="2.20.70.10">
    <property type="match status" value="1"/>
</dbReference>
<dbReference type="Gene3D" id="3.40.50.300">
    <property type="entry name" value="P-loop containing nucleotide triphosphate hydrolases"/>
    <property type="match status" value="2"/>
</dbReference>
<dbReference type="InterPro" id="IPR011545">
    <property type="entry name" value="DEAD/DEAH_box_helicase_dom"/>
</dbReference>
<dbReference type="InterPro" id="IPR014001">
    <property type="entry name" value="Helicase_ATP-bd"/>
</dbReference>
<dbReference type="InterPro" id="IPR001650">
    <property type="entry name" value="Helicase_C-like"/>
</dbReference>
<dbReference type="InterPro" id="IPR027417">
    <property type="entry name" value="P-loop_NTPase"/>
</dbReference>
<dbReference type="InterPro" id="IPR000629">
    <property type="entry name" value="RNA-helicase_DEAD-box_CS"/>
</dbReference>
<dbReference type="InterPro" id="IPR014014">
    <property type="entry name" value="RNA_helicase_DEAD_Q_motif"/>
</dbReference>
<dbReference type="InterPro" id="IPR001202">
    <property type="entry name" value="WW_dom"/>
</dbReference>
<dbReference type="InterPro" id="IPR036020">
    <property type="entry name" value="WW_dom_sf"/>
</dbReference>
<dbReference type="PANTHER" id="PTHR47958">
    <property type="entry name" value="ATP-DEPENDENT RNA HELICASE DBP3"/>
    <property type="match status" value="1"/>
</dbReference>
<dbReference type="Pfam" id="PF00270">
    <property type="entry name" value="DEAD"/>
    <property type="match status" value="1"/>
</dbReference>
<dbReference type="Pfam" id="PF00271">
    <property type="entry name" value="Helicase_C"/>
    <property type="match status" value="1"/>
</dbReference>
<dbReference type="Pfam" id="PF00397">
    <property type="entry name" value="WW"/>
    <property type="match status" value="1"/>
</dbReference>
<dbReference type="SMART" id="SM00487">
    <property type="entry name" value="DEXDc"/>
    <property type="match status" value="1"/>
</dbReference>
<dbReference type="SMART" id="SM00490">
    <property type="entry name" value="HELICc"/>
    <property type="match status" value="1"/>
</dbReference>
<dbReference type="SMART" id="SM00456">
    <property type="entry name" value="WW"/>
    <property type="match status" value="1"/>
</dbReference>
<dbReference type="SUPFAM" id="SSF52540">
    <property type="entry name" value="P-loop containing nucleoside triphosphate hydrolases"/>
    <property type="match status" value="1"/>
</dbReference>
<dbReference type="SUPFAM" id="SSF51045">
    <property type="entry name" value="WW domain"/>
    <property type="match status" value="1"/>
</dbReference>
<dbReference type="PROSITE" id="PS00039">
    <property type="entry name" value="DEAD_ATP_HELICASE"/>
    <property type="match status" value="1"/>
</dbReference>
<dbReference type="PROSITE" id="PS51192">
    <property type="entry name" value="HELICASE_ATP_BIND_1"/>
    <property type="match status" value="1"/>
</dbReference>
<dbReference type="PROSITE" id="PS51194">
    <property type="entry name" value="HELICASE_CTER"/>
    <property type="match status" value="1"/>
</dbReference>
<dbReference type="PROSITE" id="PS51195">
    <property type="entry name" value="Q_MOTIF"/>
    <property type="match status" value="1"/>
</dbReference>
<dbReference type="PROSITE" id="PS01159">
    <property type="entry name" value="WW_DOMAIN_1"/>
    <property type="match status" value="1"/>
</dbReference>
<dbReference type="PROSITE" id="PS50020">
    <property type="entry name" value="WW_DOMAIN_2"/>
    <property type="match status" value="1"/>
</dbReference>
<feature type="chain" id="PRO_0000055118" description="ATP-dependent RNA helicase-like protein DB10">
    <location>
        <begin position="1"/>
        <end position="607"/>
    </location>
</feature>
<feature type="domain" description="WW" evidence="1">
    <location>
        <begin position="18"/>
        <end position="52"/>
    </location>
</feature>
<feature type="domain" description="Helicase ATP-binding" evidence="2">
    <location>
        <begin position="176"/>
        <end position="350"/>
    </location>
</feature>
<feature type="domain" description="Helicase C-terminal" evidence="3">
    <location>
        <begin position="379"/>
        <end position="523"/>
    </location>
</feature>
<feature type="region of interest" description="Disordered" evidence="4">
    <location>
        <begin position="1"/>
        <end position="25"/>
    </location>
</feature>
<feature type="region of interest" description="Disordered" evidence="4">
    <location>
        <begin position="66"/>
        <end position="108"/>
    </location>
</feature>
<feature type="region of interest" description="Disordered" evidence="4">
    <location>
        <begin position="519"/>
        <end position="607"/>
    </location>
</feature>
<feature type="short sequence motif" description="Q motif">
    <location>
        <begin position="145"/>
        <end position="173"/>
    </location>
</feature>
<feature type="short sequence motif" description="DEAD box">
    <location>
        <begin position="298"/>
        <end position="301"/>
    </location>
</feature>
<feature type="compositionally biased region" description="Polar residues" evidence="4">
    <location>
        <begin position="1"/>
        <end position="10"/>
    </location>
</feature>
<feature type="compositionally biased region" description="Polar residues" evidence="4">
    <location>
        <begin position="89"/>
        <end position="98"/>
    </location>
</feature>
<feature type="compositionally biased region" description="Basic and acidic residues" evidence="4">
    <location>
        <begin position="99"/>
        <end position="108"/>
    </location>
</feature>
<feature type="compositionally biased region" description="Gly residues" evidence="4">
    <location>
        <begin position="538"/>
        <end position="548"/>
    </location>
</feature>
<feature type="compositionally biased region" description="Basic and acidic residues" evidence="4">
    <location>
        <begin position="562"/>
        <end position="574"/>
    </location>
</feature>
<feature type="binding site" evidence="2">
    <location>
        <begin position="189"/>
        <end position="196"/>
    </location>
    <ligand>
        <name>ATP</name>
        <dbReference type="ChEBI" id="CHEBI:30616"/>
    </ligand>
</feature>
<accession>P46942</accession>
<keyword id="KW-0067">ATP-binding</keyword>
<keyword id="KW-0347">Helicase</keyword>
<keyword id="KW-0378">Hydrolase</keyword>
<keyword id="KW-0547">Nucleotide-binding</keyword>
<keyword id="KW-1185">Reference proteome</keyword>
<keyword id="KW-0694">RNA-binding</keyword>
<comment type="catalytic activity">
    <reaction>
        <text>ATP + H2O = ADP + phosphate + H(+)</text>
        <dbReference type="Rhea" id="RHEA:13065"/>
        <dbReference type="ChEBI" id="CHEBI:15377"/>
        <dbReference type="ChEBI" id="CHEBI:15378"/>
        <dbReference type="ChEBI" id="CHEBI:30616"/>
        <dbReference type="ChEBI" id="CHEBI:43474"/>
        <dbReference type="ChEBI" id="CHEBI:456216"/>
        <dbReference type="EC" id="3.6.4.13"/>
    </reaction>
</comment>
<comment type="similarity">
    <text evidence="5">Belongs to the DEAD box helicase family.</text>
</comment>
<evidence type="ECO:0000255" key="1">
    <source>
        <dbReference type="PROSITE-ProRule" id="PRU00224"/>
    </source>
</evidence>
<evidence type="ECO:0000255" key="2">
    <source>
        <dbReference type="PROSITE-ProRule" id="PRU00541"/>
    </source>
</evidence>
<evidence type="ECO:0000255" key="3">
    <source>
        <dbReference type="PROSITE-ProRule" id="PRU00542"/>
    </source>
</evidence>
<evidence type="ECO:0000256" key="4">
    <source>
        <dbReference type="SAM" id="MobiDB-lite"/>
    </source>
</evidence>
<evidence type="ECO:0000305" key="5"/>
<proteinExistence type="evidence at transcript level"/>
<organism>
    <name type="scientific">Nicotiana sylvestris</name>
    <name type="common">Wood tobacco</name>
    <name type="synonym">South American tobacco</name>
    <dbReference type="NCBI Taxonomy" id="4096"/>
    <lineage>
        <taxon>Eukaryota</taxon>
        <taxon>Viridiplantae</taxon>
        <taxon>Streptophyta</taxon>
        <taxon>Embryophyta</taxon>
        <taxon>Tracheophyta</taxon>
        <taxon>Spermatophyta</taxon>
        <taxon>Magnoliopsida</taxon>
        <taxon>eudicotyledons</taxon>
        <taxon>Gunneridae</taxon>
        <taxon>Pentapetalae</taxon>
        <taxon>asterids</taxon>
        <taxon>lamiids</taxon>
        <taxon>Solanales</taxon>
        <taxon>Solanaceae</taxon>
        <taxon>Nicotianoideae</taxon>
        <taxon>Nicotianeae</taxon>
        <taxon>Nicotiana</taxon>
    </lineage>
</organism>